<proteinExistence type="evidence at protein level"/>
<comment type="subcellular location">
    <subcellularLocation>
        <location evidence="2">Cytoplasm</location>
        <location evidence="2">Cytosol</location>
    </subcellularLocation>
</comment>
<comment type="PTM">
    <text evidence="2">Myristoylated.</text>
</comment>
<comment type="PTM">
    <text evidence="2">The N-myristoylated protein is further palmitoylated.</text>
</comment>
<comment type="similarity">
    <text evidence="4">To yeast YGL108C.</text>
</comment>
<protein>
    <recommendedName>
        <fullName>Uncharacterized protein new13</fullName>
    </recommendedName>
</protein>
<organism>
    <name type="scientific">Schizosaccharomyces pombe (strain 972 / ATCC 24843)</name>
    <name type="common">Fission yeast</name>
    <dbReference type="NCBI Taxonomy" id="284812"/>
    <lineage>
        <taxon>Eukaryota</taxon>
        <taxon>Fungi</taxon>
        <taxon>Dikarya</taxon>
        <taxon>Ascomycota</taxon>
        <taxon>Taphrinomycotina</taxon>
        <taxon>Schizosaccharomycetes</taxon>
        <taxon>Schizosaccharomycetales</taxon>
        <taxon>Schizosaccharomycetaceae</taxon>
        <taxon>Schizosaccharomyces</taxon>
    </lineage>
</organism>
<reference key="1">
    <citation type="journal article" date="2002" name="Nature">
        <title>The genome sequence of Schizosaccharomyces pombe.</title>
        <authorList>
            <person name="Wood V."/>
            <person name="Gwilliam R."/>
            <person name="Rajandream M.A."/>
            <person name="Lyne M.H."/>
            <person name="Lyne R."/>
            <person name="Stewart A."/>
            <person name="Sgouros J.G."/>
            <person name="Peat N."/>
            <person name="Hayles J."/>
            <person name="Baker S.G."/>
            <person name="Basham D."/>
            <person name="Bowman S."/>
            <person name="Brooks K."/>
            <person name="Brown D."/>
            <person name="Brown S."/>
            <person name="Chillingworth T."/>
            <person name="Churcher C.M."/>
            <person name="Collins M."/>
            <person name="Connor R."/>
            <person name="Cronin A."/>
            <person name="Davis P."/>
            <person name="Feltwell T."/>
            <person name="Fraser A."/>
            <person name="Gentles S."/>
            <person name="Goble A."/>
            <person name="Hamlin N."/>
            <person name="Harris D.E."/>
            <person name="Hidalgo J."/>
            <person name="Hodgson G."/>
            <person name="Holroyd S."/>
            <person name="Hornsby T."/>
            <person name="Howarth S."/>
            <person name="Huckle E.J."/>
            <person name="Hunt S."/>
            <person name="Jagels K."/>
            <person name="James K.D."/>
            <person name="Jones L."/>
            <person name="Jones M."/>
            <person name="Leather S."/>
            <person name="McDonald S."/>
            <person name="McLean J."/>
            <person name="Mooney P."/>
            <person name="Moule S."/>
            <person name="Mungall K.L."/>
            <person name="Murphy L.D."/>
            <person name="Niblett D."/>
            <person name="Odell C."/>
            <person name="Oliver K."/>
            <person name="O'Neil S."/>
            <person name="Pearson D."/>
            <person name="Quail M.A."/>
            <person name="Rabbinowitsch E."/>
            <person name="Rutherford K.M."/>
            <person name="Rutter S."/>
            <person name="Saunders D."/>
            <person name="Seeger K."/>
            <person name="Sharp S."/>
            <person name="Skelton J."/>
            <person name="Simmonds M.N."/>
            <person name="Squares R."/>
            <person name="Squares S."/>
            <person name="Stevens K."/>
            <person name="Taylor K."/>
            <person name="Taylor R.G."/>
            <person name="Tivey A."/>
            <person name="Walsh S.V."/>
            <person name="Warren T."/>
            <person name="Whitehead S."/>
            <person name="Woodward J.R."/>
            <person name="Volckaert G."/>
            <person name="Aert R."/>
            <person name="Robben J."/>
            <person name="Grymonprez B."/>
            <person name="Weltjens I."/>
            <person name="Vanstreels E."/>
            <person name="Rieger M."/>
            <person name="Schaefer M."/>
            <person name="Mueller-Auer S."/>
            <person name="Gabel C."/>
            <person name="Fuchs M."/>
            <person name="Duesterhoeft A."/>
            <person name="Fritzc C."/>
            <person name="Holzer E."/>
            <person name="Moestl D."/>
            <person name="Hilbert H."/>
            <person name="Borzym K."/>
            <person name="Langer I."/>
            <person name="Beck A."/>
            <person name="Lehrach H."/>
            <person name="Reinhardt R."/>
            <person name="Pohl T.M."/>
            <person name="Eger P."/>
            <person name="Zimmermann W."/>
            <person name="Wedler H."/>
            <person name="Wambutt R."/>
            <person name="Purnelle B."/>
            <person name="Goffeau A."/>
            <person name="Cadieu E."/>
            <person name="Dreano S."/>
            <person name="Gloux S."/>
            <person name="Lelaure V."/>
            <person name="Mottier S."/>
            <person name="Galibert F."/>
            <person name="Aves S.J."/>
            <person name="Xiang Z."/>
            <person name="Hunt C."/>
            <person name="Moore K."/>
            <person name="Hurst S.M."/>
            <person name="Lucas M."/>
            <person name="Rochet M."/>
            <person name="Gaillardin C."/>
            <person name="Tallada V.A."/>
            <person name="Garzon A."/>
            <person name="Thode G."/>
            <person name="Daga R.R."/>
            <person name="Cruzado L."/>
            <person name="Jimenez J."/>
            <person name="Sanchez M."/>
            <person name="del Rey F."/>
            <person name="Benito J."/>
            <person name="Dominguez A."/>
            <person name="Revuelta J.L."/>
            <person name="Moreno S."/>
            <person name="Armstrong J."/>
            <person name="Forsburg S.L."/>
            <person name="Cerutti L."/>
            <person name="Lowe T."/>
            <person name="McCombie W.R."/>
            <person name="Paulsen I."/>
            <person name="Potashkin J."/>
            <person name="Shpakovski G.V."/>
            <person name="Ussery D."/>
            <person name="Barrell B.G."/>
            <person name="Nurse P."/>
        </authorList>
    </citation>
    <scope>NUCLEOTIDE SEQUENCE [LARGE SCALE GENOMIC DNA]</scope>
    <source>
        <strain>972 / ATCC 24843</strain>
    </source>
</reference>
<reference key="2">
    <citation type="journal article" date="2011" name="Science">
        <title>Comparative functional genomics of the fission yeasts.</title>
        <authorList>
            <person name="Rhind N."/>
            <person name="Chen Z."/>
            <person name="Yassour M."/>
            <person name="Thompson D.A."/>
            <person name="Haas B.J."/>
            <person name="Habib N."/>
            <person name="Wapinski I."/>
            <person name="Roy S."/>
            <person name="Lin M.F."/>
            <person name="Heiman D.I."/>
            <person name="Young S.K."/>
            <person name="Furuya K."/>
            <person name="Guo Y."/>
            <person name="Pidoux A."/>
            <person name="Chen H.M."/>
            <person name="Robbertse B."/>
            <person name="Goldberg J.M."/>
            <person name="Aoki K."/>
            <person name="Bayne E.H."/>
            <person name="Berlin A.M."/>
            <person name="Desjardins C.A."/>
            <person name="Dobbs E."/>
            <person name="Dukaj L."/>
            <person name="Fan L."/>
            <person name="FitzGerald M.G."/>
            <person name="French C."/>
            <person name="Gujja S."/>
            <person name="Hansen K."/>
            <person name="Keifenheim D."/>
            <person name="Levin J.Z."/>
            <person name="Mosher R.A."/>
            <person name="Mueller C.A."/>
            <person name="Pfiffner J."/>
            <person name="Priest M."/>
            <person name="Russ C."/>
            <person name="Smialowska A."/>
            <person name="Swoboda P."/>
            <person name="Sykes S.M."/>
            <person name="Vaughn M."/>
            <person name="Vengrova S."/>
            <person name="Yoder R."/>
            <person name="Zeng Q."/>
            <person name="Allshire R."/>
            <person name="Baulcombe D."/>
            <person name="Birren B.W."/>
            <person name="Brown W."/>
            <person name="Ekwall K."/>
            <person name="Kellis M."/>
            <person name="Leatherwood J."/>
            <person name="Levin H."/>
            <person name="Margalit H."/>
            <person name="Martienssen R."/>
            <person name="Nieduszynski C.A."/>
            <person name="Spatafora J.W."/>
            <person name="Friedman N."/>
            <person name="Dalgaard J.Z."/>
            <person name="Baumann P."/>
            <person name="Niki H."/>
            <person name="Regev A."/>
            <person name="Nusbaum C."/>
        </authorList>
    </citation>
    <scope>IDENTIFICATION</scope>
</reference>
<reference key="3">
    <citation type="journal article" date="2011" name="Genetics">
        <title>Augmented annotation of the Schizosaccharomyces pombe genome reveals additional genes required for growth and viability.</title>
        <authorList>
            <person name="Bitton D.A."/>
            <person name="Wood V."/>
            <person name="Scutt P.J."/>
            <person name="Grallert A."/>
            <person name="Yates T."/>
            <person name="Smith D.L."/>
            <person name="Hagan I.M."/>
            <person name="Miller C.J."/>
        </authorList>
    </citation>
    <scope>IDENTIFICATION BY MASS SPECTROMETRY</scope>
</reference>
<gene>
    <name type="primary">new13</name>
    <name type="ORF">SPAC4D7.14</name>
</gene>
<evidence type="ECO:0000250" key="1"/>
<evidence type="ECO:0000250" key="2">
    <source>
        <dbReference type="UniProtKB" id="P53139"/>
    </source>
</evidence>
<evidence type="ECO:0000256" key="3">
    <source>
        <dbReference type="SAM" id="MobiDB-lite"/>
    </source>
</evidence>
<evidence type="ECO:0000305" key="4"/>
<accession>G2TRK9</accession>
<sequence length="121" mass="13535">MGQVLSICSSKSKEKKVVNEKPTVKPKPAVNVQKPAKAITKASSPPRTGRKLAETGNTSNKEHLSPTEAARVAAEKRNIEKKKGNGKLGRQLEKERAKPMKEHLQDISTQRQQEREQIKWD</sequence>
<feature type="initiator methionine" description="Removed" evidence="1">
    <location>
        <position position="1"/>
    </location>
</feature>
<feature type="chain" id="PRO_0000416507" description="Uncharacterized protein new13">
    <location>
        <begin position="2"/>
        <end position="121"/>
    </location>
</feature>
<feature type="region of interest" description="Disordered" evidence="3">
    <location>
        <begin position="1"/>
        <end position="121"/>
    </location>
</feature>
<feature type="compositionally biased region" description="Basic and acidic residues" evidence="3">
    <location>
        <begin position="11"/>
        <end position="23"/>
    </location>
</feature>
<feature type="compositionally biased region" description="Basic and acidic residues" evidence="3">
    <location>
        <begin position="73"/>
        <end position="83"/>
    </location>
</feature>
<feature type="compositionally biased region" description="Basic and acidic residues" evidence="3">
    <location>
        <begin position="90"/>
        <end position="105"/>
    </location>
</feature>
<feature type="compositionally biased region" description="Basic and acidic residues" evidence="3">
    <location>
        <begin position="112"/>
        <end position="121"/>
    </location>
</feature>
<feature type="lipid moiety-binding region" description="N-myristoyl glycine" evidence="1">
    <location>
        <position position="2"/>
    </location>
</feature>
<feature type="lipid moiety-binding region" description="S-palmitoyl cysteine" evidence="1">
    <location>
        <position position="8"/>
    </location>
</feature>
<name>NEW13_SCHPO</name>
<dbReference type="EMBL" id="CU329670">
    <property type="protein sequence ID" value="CCD31346.1"/>
    <property type="molecule type" value="Genomic_DNA"/>
</dbReference>
<dbReference type="RefSeq" id="XP_004001801.1">
    <property type="nucleotide sequence ID" value="XM_004001752.1"/>
</dbReference>
<dbReference type="SMR" id="G2TRK9"/>
<dbReference type="FunCoup" id="G2TRK9">
    <property type="interactions" value="2"/>
</dbReference>
<dbReference type="STRING" id="284812.G2TRK9"/>
<dbReference type="iPTMnet" id="G2TRK9"/>
<dbReference type="PaxDb" id="4896-SPAC4D7.14.1"/>
<dbReference type="EnsemblFungi" id="SPAC4D7.14.1">
    <property type="protein sequence ID" value="SPAC4D7.14.1:pep"/>
    <property type="gene ID" value="SPAC4D7.14"/>
</dbReference>
<dbReference type="PomBase" id="SPAC4D7.14">
    <property type="gene designation" value="new13"/>
</dbReference>
<dbReference type="VEuPathDB" id="FungiDB:SPAC4D7.14"/>
<dbReference type="HOGENOM" id="CLU_2039417_0_0_1"/>
<dbReference type="InParanoid" id="G2TRK9"/>
<dbReference type="OMA" id="SICHKKP"/>
<dbReference type="PRO" id="PR:G2TRK9"/>
<dbReference type="Proteomes" id="UP000002485">
    <property type="component" value="Chromosome I"/>
</dbReference>
<dbReference type="GO" id="GO:0005829">
    <property type="term" value="C:cytosol"/>
    <property type="evidence" value="ECO:0007669"/>
    <property type="project" value="UniProtKB-SubCell"/>
</dbReference>
<dbReference type="GO" id="GO:0036503">
    <property type="term" value="P:ERAD pathway"/>
    <property type="evidence" value="ECO:0000266"/>
    <property type="project" value="PomBase"/>
</dbReference>
<dbReference type="InterPro" id="IPR031632">
    <property type="entry name" value="SVIP"/>
</dbReference>
<dbReference type="Pfam" id="PF15811">
    <property type="entry name" value="SVIP"/>
    <property type="match status" value="1"/>
</dbReference>
<keyword id="KW-0963">Cytoplasm</keyword>
<keyword id="KW-0449">Lipoprotein</keyword>
<keyword id="KW-0519">Myristate</keyword>
<keyword id="KW-0564">Palmitate</keyword>
<keyword id="KW-1185">Reference proteome</keyword>